<gene>
    <name type="primary">STAT6</name>
</gene>
<keyword id="KW-0002">3D-structure</keyword>
<keyword id="KW-0007">Acetylation</keyword>
<keyword id="KW-0010">Activator</keyword>
<keyword id="KW-0013">ADP-ribosylation</keyword>
<keyword id="KW-0025">Alternative splicing</keyword>
<keyword id="KW-0963">Cytoplasm</keyword>
<keyword id="KW-0225">Disease variant</keyword>
<keyword id="KW-0238">DNA-binding</keyword>
<keyword id="KW-0539">Nucleus</keyword>
<keyword id="KW-0597">Phosphoprotein</keyword>
<keyword id="KW-1267">Proteomics identification</keyword>
<keyword id="KW-1185">Reference proteome</keyword>
<keyword id="KW-0727">SH2 domain</keyword>
<keyword id="KW-0804">Transcription</keyword>
<keyword id="KW-0805">Transcription regulation</keyword>
<evidence type="ECO:0000250" key="1"/>
<evidence type="ECO:0000250" key="2">
    <source>
        <dbReference type="UniProtKB" id="P52633"/>
    </source>
</evidence>
<evidence type="ECO:0000255" key="3">
    <source>
        <dbReference type="PROSITE-ProRule" id="PRU00191"/>
    </source>
</evidence>
<evidence type="ECO:0000256" key="4">
    <source>
        <dbReference type="SAM" id="MobiDB-lite"/>
    </source>
</evidence>
<evidence type="ECO:0000269" key="5">
    <source>
    </source>
</evidence>
<evidence type="ECO:0000269" key="6">
    <source>
    </source>
</evidence>
<evidence type="ECO:0000269" key="7">
    <source>
    </source>
</evidence>
<evidence type="ECO:0000269" key="8">
    <source>
    </source>
</evidence>
<evidence type="ECO:0000269" key="9">
    <source>
    </source>
</evidence>
<evidence type="ECO:0000269" key="10">
    <source>
    </source>
</evidence>
<evidence type="ECO:0000269" key="11">
    <source>
    </source>
</evidence>
<evidence type="ECO:0000269" key="12">
    <source ref="5"/>
</evidence>
<evidence type="ECO:0000303" key="13">
    <source>
    </source>
</evidence>
<evidence type="ECO:0000303" key="14">
    <source ref="3"/>
</evidence>
<evidence type="ECO:0000305" key="15"/>
<evidence type="ECO:0007744" key="16">
    <source>
    </source>
</evidence>
<evidence type="ECO:0007829" key="17">
    <source>
        <dbReference type="PDB" id="1OJ5"/>
    </source>
</evidence>
<evidence type="ECO:0007829" key="18">
    <source>
        <dbReference type="PDB" id="4Y5U"/>
    </source>
</evidence>
<evidence type="ECO:0007829" key="19">
    <source>
        <dbReference type="PDB" id="4Y5W"/>
    </source>
</evidence>
<evidence type="ECO:0007829" key="20">
    <source>
        <dbReference type="PDB" id="5D39"/>
    </source>
</evidence>
<evidence type="ECO:0007829" key="21">
    <source>
        <dbReference type="PDB" id="5NWM"/>
    </source>
</evidence>
<reference key="1">
    <citation type="journal article" date="1994" name="Science">
        <title>An interleukin-4-induced transcription factor: IL-4 Stat.</title>
        <authorList>
            <person name="Hou J."/>
            <person name="Schindler U."/>
            <person name="Henzel W.J."/>
            <person name="Ho T."/>
            <person name="Brasseur M."/>
            <person name="McKnight S.L."/>
        </authorList>
    </citation>
    <scope>NUCLEOTIDE SEQUENCE [MRNA] (ISOFORM 1)</scope>
</reference>
<reference key="2">
    <citation type="journal article" date="1998" name="Genomics">
        <title>Localization of the human stat6 gene to chromosome 12q13.3-q14.1, a region implicated in multiple solid tumors.</title>
        <authorList>
            <person name="Patel B.K."/>
            <person name="Keck C.L."/>
            <person name="O'Leary R.S."/>
            <person name="Popescu N.C."/>
            <person name="LaRochelle W.J."/>
        </authorList>
    </citation>
    <scope>NUCLEOTIDE SEQUENCE [GENOMIC DNA]</scope>
</reference>
<reference key="3">
    <citation type="submission" date="2003-02" db="EMBL/GenBank/DDBJ databases">
        <title>STAT6 mRNA, nirs splice variant 2.</title>
        <authorList>
            <person name="Tabata Y."/>
            <person name="Sameshima E."/>
            <person name="Hayashi A."/>
            <person name="Iida K."/>
            <person name="Mitsuyama M."/>
            <person name="Kanai S."/>
            <person name="Furuya T."/>
            <person name="Saito T."/>
        </authorList>
    </citation>
    <scope>NUCLEOTIDE SEQUENCE [MRNA] (ISOFORM 2)</scope>
</reference>
<reference key="4">
    <citation type="journal article" date="2004" name="Nat. Genet.">
        <title>Complete sequencing and characterization of 21,243 full-length human cDNAs.</title>
        <authorList>
            <person name="Ota T."/>
            <person name="Suzuki Y."/>
            <person name="Nishikawa T."/>
            <person name="Otsuki T."/>
            <person name="Sugiyama T."/>
            <person name="Irie R."/>
            <person name="Wakamatsu A."/>
            <person name="Hayashi K."/>
            <person name="Sato H."/>
            <person name="Nagai K."/>
            <person name="Kimura K."/>
            <person name="Makita H."/>
            <person name="Sekine M."/>
            <person name="Obayashi M."/>
            <person name="Nishi T."/>
            <person name="Shibahara T."/>
            <person name="Tanaka T."/>
            <person name="Ishii S."/>
            <person name="Yamamoto J."/>
            <person name="Saito K."/>
            <person name="Kawai Y."/>
            <person name="Isono Y."/>
            <person name="Nakamura Y."/>
            <person name="Nagahari K."/>
            <person name="Murakami K."/>
            <person name="Yasuda T."/>
            <person name="Iwayanagi T."/>
            <person name="Wagatsuma M."/>
            <person name="Shiratori A."/>
            <person name="Sudo H."/>
            <person name="Hosoiri T."/>
            <person name="Kaku Y."/>
            <person name="Kodaira H."/>
            <person name="Kondo H."/>
            <person name="Sugawara M."/>
            <person name="Takahashi M."/>
            <person name="Kanda K."/>
            <person name="Yokoi T."/>
            <person name="Furuya T."/>
            <person name="Kikkawa E."/>
            <person name="Omura Y."/>
            <person name="Abe K."/>
            <person name="Kamihara K."/>
            <person name="Katsuta N."/>
            <person name="Sato K."/>
            <person name="Tanikawa M."/>
            <person name="Yamazaki M."/>
            <person name="Ninomiya K."/>
            <person name="Ishibashi T."/>
            <person name="Yamashita H."/>
            <person name="Murakawa K."/>
            <person name="Fujimori K."/>
            <person name="Tanai H."/>
            <person name="Kimata M."/>
            <person name="Watanabe M."/>
            <person name="Hiraoka S."/>
            <person name="Chiba Y."/>
            <person name="Ishida S."/>
            <person name="Ono Y."/>
            <person name="Takiguchi S."/>
            <person name="Watanabe S."/>
            <person name="Yosida M."/>
            <person name="Hotuta T."/>
            <person name="Kusano J."/>
            <person name="Kanehori K."/>
            <person name="Takahashi-Fujii A."/>
            <person name="Hara H."/>
            <person name="Tanase T.-O."/>
            <person name="Nomura Y."/>
            <person name="Togiya S."/>
            <person name="Komai F."/>
            <person name="Hara R."/>
            <person name="Takeuchi K."/>
            <person name="Arita M."/>
            <person name="Imose N."/>
            <person name="Musashino K."/>
            <person name="Yuuki H."/>
            <person name="Oshima A."/>
            <person name="Sasaki N."/>
            <person name="Aotsuka S."/>
            <person name="Yoshikawa Y."/>
            <person name="Matsunawa H."/>
            <person name="Ichihara T."/>
            <person name="Shiohata N."/>
            <person name="Sano S."/>
            <person name="Moriya S."/>
            <person name="Momiyama H."/>
            <person name="Satoh N."/>
            <person name="Takami S."/>
            <person name="Terashima Y."/>
            <person name="Suzuki O."/>
            <person name="Nakagawa S."/>
            <person name="Senoh A."/>
            <person name="Mizoguchi H."/>
            <person name="Goto Y."/>
            <person name="Shimizu F."/>
            <person name="Wakebe H."/>
            <person name="Hishigaki H."/>
            <person name="Watanabe T."/>
            <person name="Sugiyama A."/>
            <person name="Takemoto M."/>
            <person name="Kawakami B."/>
            <person name="Yamazaki M."/>
            <person name="Watanabe K."/>
            <person name="Kumagai A."/>
            <person name="Itakura S."/>
            <person name="Fukuzumi Y."/>
            <person name="Fujimori Y."/>
            <person name="Komiyama M."/>
            <person name="Tashiro H."/>
            <person name="Tanigami A."/>
            <person name="Fujiwara T."/>
            <person name="Ono T."/>
            <person name="Yamada K."/>
            <person name="Fujii Y."/>
            <person name="Ozaki K."/>
            <person name="Hirao M."/>
            <person name="Ohmori Y."/>
            <person name="Kawabata A."/>
            <person name="Hikiji T."/>
            <person name="Kobatake N."/>
            <person name="Inagaki H."/>
            <person name="Ikema Y."/>
            <person name="Okamoto S."/>
            <person name="Okitani R."/>
            <person name="Kawakami T."/>
            <person name="Noguchi S."/>
            <person name="Itoh T."/>
            <person name="Shigeta K."/>
            <person name="Senba T."/>
            <person name="Matsumura K."/>
            <person name="Nakajima Y."/>
            <person name="Mizuno T."/>
            <person name="Morinaga M."/>
            <person name="Sasaki M."/>
            <person name="Togashi T."/>
            <person name="Oyama M."/>
            <person name="Hata H."/>
            <person name="Watanabe M."/>
            <person name="Komatsu T."/>
            <person name="Mizushima-Sugano J."/>
            <person name="Satoh T."/>
            <person name="Shirai Y."/>
            <person name="Takahashi Y."/>
            <person name="Nakagawa K."/>
            <person name="Okumura K."/>
            <person name="Nagase T."/>
            <person name="Nomura N."/>
            <person name="Kikuchi H."/>
            <person name="Masuho Y."/>
            <person name="Yamashita R."/>
            <person name="Nakai K."/>
            <person name="Yada T."/>
            <person name="Nakamura Y."/>
            <person name="Ohara O."/>
            <person name="Isogai T."/>
            <person name="Sugano S."/>
        </authorList>
    </citation>
    <scope>NUCLEOTIDE SEQUENCE [LARGE SCALE MRNA] (ISOFORMS 1 AND 3)</scope>
    <source>
        <tissue>Tongue</tissue>
    </source>
</reference>
<reference key="5">
    <citation type="submission" date="2001-10" db="EMBL/GenBank/DDBJ databases">
        <authorList>
            <consortium name="SeattleSNPs variation discovery resource"/>
        </authorList>
    </citation>
    <scope>NUCLEOTIDE SEQUENCE [GENOMIC DNA]</scope>
    <scope>VARIANT ARG-181</scope>
</reference>
<reference key="6">
    <citation type="journal article" date="2006" name="Nature">
        <title>The finished DNA sequence of human chromosome 12.</title>
        <authorList>
            <person name="Scherer S.E."/>
            <person name="Muzny D.M."/>
            <person name="Buhay C.J."/>
            <person name="Chen R."/>
            <person name="Cree A."/>
            <person name="Ding Y."/>
            <person name="Dugan-Rocha S."/>
            <person name="Gill R."/>
            <person name="Gunaratne P."/>
            <person name="Harris R.A."/>
            <person name="Hawes A.C."/>
            <person name="Hernandez J."/>
            <person name="Hodgson A.V."/>
            <person name="Hume J."/>
            <person name="Jackson A."/>
            <person name="Khan Z.M."/>
            <person name="Kovar-Smith C."/>
            <person name="Lewis L.R."/>
            <person name="Lozado R.J."/>
            <person name="Metzker M.L."/>
            <person name="Milosavljevic A."/>
            <person name="Miner G.R."/>
            <person name="Montgomery K.T."/>
            <person name="Morgan M.B."/>
            <person name="Nazareth L.V."/>
            <person name="Scott G."/>
            <person name="Sodergren E."/>
            <person name="Song X.-Z."/>
            <person name="Steffen D."/>
            <person name="Lovering R.C."/>
            <person name="Wheeler D.A."/>
            <person name="Worley K.C."/>
            <person name="Yuan Y."/>
            <person name="Zhang Z."/>
            <person name="Adams C.Q."/>
            <person name="Ansari-Lari M.A."/>
            <person name="Ayele M."/>
            <person name="Brown M.J."/>
            <person name="Chen G."/>
            <person name="Chen Z."/>
            <person name="Clerc-Blankenburg K.P."/>
            <person name="Davis C."/>
            <person name="Delgado O."/>
            <person name="Dinh H.H."/>
            <person name="Draper H."/>
            <person name="Gonzalez-Garay M.L."/>
            <person name="Havlak P."/>
            <person name="Jackson L.R."/>
            <person name="Jacob L.S."/>
            <person name="Kelly S.H."/>
            <person name="Li L."/>
            <person name="Li Z."/>
            <person name="Liu J."/>
            <person name="Liu W."/>
            <person name="Lu J."/>
            <person name="Maheshwari M."/>
            <person name="Nguyen B.-V."/>
            <person name="Okwuonu G.O."/>
            <person name="Pasternak S."/>
            <person name="Perez L.M."/>
            <person name="Plopper F.J.H."/>
            <person name="Santibanez J."/>
            <person name="Shen H."/>
            <person name="Tabor P.E."/>
            <person name="Verduzco D."/>
            <person name="Waldron L."/>
            <person name="Wang Q."/>
            <person name="Williams G.A."/>
            <person name="Zhang J."/>
            <person name="Zhou J."/>
            <person name="Allen C.C."/>
            <person name="Amin A.G."/>
            <person name="Anyalebechi V."/>
            <person name="Bailey M."/>
            <person name="Barbaria J.A."/>
            <person name="Bimage K.E."/>
            <person name="Bryant N.P."/>
            <person name="Burch P.E."/>
            <person name="Burkett C.E."/>
            <person name="Burrell K.L."/>
            <person name="Calderon E."/>
            <person name="Cardenas V."/>
            <person name="Carter K."/>
            <person name="Casias K."/>
            <person name="Cavazos I."/>
            <person name="Cavazos S.R."/>
            <person name="Ceasar H."/>
            <person name="Chacko J."/>
            <person name="Chan S.N."/>
            <person name="Chavez D."/>
            <person name="Christopoulos C."/>
            <person name="Chu J."/>
            <person name="Cockrell R."/>
            <person name="Cox C.D."/>
            <person name="Dang M."/>
            <person name="Dathorne S.R."/>
            <person name="David R."/>
            <person name="Davis C.M."/>
            <person name="Davy-Carroll L."/>
            <person name="Deshazo D.R."/>
            <person name="Donlin J.E."/>
            <person name="D'Souza L."/>
            <person name="Eaves K.A."/>
            <person name="Egan A."/>
            <person name="Emery-Cohen A.J."/>
            <person name="Escotto M."/>
            <person name="Flagg N."/>
            <person name="Forbes L.D."/>
            <person name="Gabisi A.M."/>
            <person name="Garza M."/>
            <person name="Hamilton C."/>
            <person name="Henderson N."/>
            <person name="Hernandez O."/>
            <person name="Hines S."/>
            <person name="Hogues M.E."/>
            <person name="Huang M."/>
            <person name="Idlebird D.G."/>
            <person name="Johnson R."/>
            <person name="Jolivet A."/>
            <person name="Jones S."/>
            <person name="Kagan R."/>
            <person name="King L.M."/>
            <person name="Leal B."/>
            <person name="Lebow H."/>
            <person name="Lee S."/>
            <person name="LeVan J.M."/>
            <person name="Lewis L.C."/>
            <person name="London P."/>
            <person name="Lorensuhewa L.M."/>
            <person name="Loulseged H."/>
            <person name="Lovett D.A."/>
            <person name="Lucier A."/>
            <person name="Lucier R.L."/>
            <person name="Ma J."/>
            <person name="Madu R.C."/>
            <person name="Mapua P."/>
            <person name="Martindale A.D."/>
            <person name="Martinez E."/>
            <person name="Massey E."/>
            <person name="Mawhiney S."/>
            <person name="Meador M.G."/>
            <person name="Mendez S."/>
            <person name="Mercado C."/>
            <person name="Mercado I.C."/>
            <person name="Merritt C.E."/>
            <person name="Miner Z.L."/>
            <person name="Minja E."/>
            <person name="Mitchell T."/>
            <person name="Mohabbat F."/>
            <person name="Mohabbat K."/>
            <person name="Montgomery B."/>
            <person name="Moore N."/>
            <person name="Morris S."/>
            <person name="Munidasa M."/>
            <person name="Ngo R.N."/>
            <person name="Nguyen N.B."/>
            <person name="Nickerson E."/>
            <person name="Nwaokelemeh O.O."/>
            <person name="Nwokenkwo S."/>
            <person name="Obregon M."/>
            <person name="Oguh M."/>
            <person name="Oragunye N."/>
            <person name="Oviedo R.J."/>
            <person name="Parish B.J."/>
            <person name="Parker D.N."/>
            <person name="Parrish J."/>
            <person name="Parks K.L."/>
            <person name="Paul H.A."/>
            <person name="Payton B.A."/>
            <person name="Perez A."/>
            <person name="Perrin W."/>
            <person name="Pickens A."/>
            <person name="Primus E.L."/>
            <person name="Pu L.-L."/>
            <person name="Puazo M."/>
            <person name="Quiles M.M."/>
            <person name="Quiroz J.B."/>
            <person name="Rabata D."/>
            <person name="Reeves K."/>
            <person name="Ruiz S.J."/>
            <person name="Shao H."/>
            <person name="Sisson I."/>
            <person name="Sonaike T."/>
            <person name="Sorelle R.P."/>
            <person name="Sutton A.E."/>
            <person name="Svatek A.F."/>
            <person name="Svetz L.A."/>
            <person name="Tamerisa K.S."/>
            <person name="Taylor T.R."/>
            <person name="Teague B."/>
            <person name="Thomas N."/>
            <person name="Thorn R.D."/>
            <person name="Trejos Z.Y."/>
            <person name="Trevino B.K."/>
            <person name="Ukegbu O.N."/>
            <person name="Urban J.B."/>
            <person name="Vasquez L.I."/>
            <person name="Vera V.A."/>
            <person name="Villasana D.M."/>
            <person name="Wang L."/>
            <person name="Ward-Moore S."/>
            <person name="Warren J.T."/>
            <person name="Wei X."/>
            <person name="White F."/>
            <person name="Williamson A.L."/>
            <person name="Wleczyk R."/>
            <person name="Wooden H.S."/>
            <person name="Wooden S.H."/>
            <person name="Yen J."/>
            <person name="Yoon L."/>
            <person name="Yoon V."/>
            <person name="Zorrilla S.E."/>
            <person name="Nelson D."/>
            <person name="Kucherlapati R."/>
            <person name="Weinstock G."/>
            <person name="Gibbs R.A."/>
        </authorList>
    </citation>
    <scope>NUCLEOTIDE SEQUENCE [LARGE SCALE GENOMIC DNA]</scope>
</reference>
<reference key="7">
    <citation type="journal article" date="2004" name="Genome Res.">
        <title>The status, quality, and expansion of the NIH full-length cDNA project: the Mammalian Gene Collection (MGC).</title>
        <authorList>
            <consortium name="The MGC Project Team"/>
        </authorList>
    </citation>
    <scope>NUCLEOTIDE SEQUENCE [LARGE SCALE MRNA] (ISOFORM 1)</scope>
    <source>
        <tissue>Uterus</tissue>
    </source>
</reference>
<reference key="8">
    <citation type="journal article" date="2002" name="J. Biol. Chem.">
        <title>An LXXLL motif in the transactivation domain of STAT6 mediates recruitment of NCoA-1/SRC-1.</title>
        <authorList>
            <person name="Litterst C.M."/>
            <person name="Pfitzner E."/>
        </authorList>
    </citation>
    <scope>INTERACTION WITH NCOA1</scope>
    <scope>MUTAGENESIS OF LEU-802 AND LEU-805</scope>
</reference>
<reference key="9">
    <citation type="journal article" date="2007" name="Mol. Cell. Biol.">
        <title>T-cell protein tyrosine phosphatase, distinctively expressed in activated-B-cell-like diffuse large B-cell lymphomas, is the nuclear phosphatase of STAT6.</title>
        <authorList>
            <person name="Lu X."/>
            <person name="Chen J."/>
            <person name="Sasmono R.T."/>
            <person name="Hsi E.D."/>
            <person name="Sarosiek K.A."/>
            <person name="Tiganis T."/>
            <person name="Lossos I.S."/>
        </authorList>
    </citation>
    <scope>FUNCTION IN IL4 SIGNALING</scope>
    <scope>PHOSPHORYLATION</scope>
    <scope>DEPHOSPHORYLATION BY PTPN2</scope>
</reference>
<reference key="10">
    <citation type="journal article" date="2012" name="Mol. Cell. Proteomics">
        <title>Comparative large-scale characterisation of plant vs. mammal proteins reveals similar and idiosyncratic N-alpha acetylation features.</title>
        <authorList>
            <person name="Bienvenut W.V."/>
            <person name="Sumpton D."/>
            <person name="Martinez A."/>
            <person name="Lilla S."/>
            <person name="Espagne C."/>
            <person name="Meinnel T."/>
            <person name="Giglione C."/>
        </authorList>
    </citation>
    <scope>ACETYLATION [LARGE SCALE ANALYSIS] AT SER-2</scope>
    <scope>CLEAVAGE OF INITIATOR METHIONINE [LARGE SCALE ANALYSIS]</scope>
    <scope>IDENTIFICATION BY MASS SPECTROMETRY [LARGE SCALE ANALYSIS]</scope>
</reference>
<reference key="11">
    <citation type="journal article" date="2016" name="Nat. Commun.">
        <title>PARP9 and PARP14 cross-regulate macrophage activation via STAT1 ADP-ribosylation.</title>
        <authorList>
            <person name="Iwata H."/>
            <person name="Goettsch C."/>
            <person name="Sharma A."/>
            <person name="Ricchiuto P."/>
            <person name="Goh W.W."/>
            <person name="Halu A."/>
            <person name="Yamada I."/>
            <person name="Yoshida H."/>
            <person name="Hara T."/>
            <person name="Wei M."/>
            <person name="Inoue N."/>
            <person name="Fukuda D."/>
            <person name="Mojcher A."/>
            <person name="Mattson P.C."/>
            <person name="Barabasi A.L."/>
            <person name="Boothby M."/>
            <person name="Aikawa E."/>
            <person name="Singh S.A."/>
            <person name="Aikawa M."/>
        </authorList>
    </citation>
    <scope>PHOSPHORYLATION AT TYR-641</scope>
    <scope>ADP-RIBOSYLATION</scope>
</reference>
<reference key="12">
    <citation type="journal article" date="2004" name="J. Mol. Biol.">
        <title>Structure of the NCoA-1/SRC-1 PAS-B domain bound to the LXXLL motif of the STAT6 transactivation domain.</title>
        <authorList>
            <person name="Razeto A."/>
            <person name="Ramakrishnan V."/>
            <person name="Litterst C.M."/>
            <person name="Giller K."/>
            <person name="Griesinger C."/>
            <person name="Carlomagno T."/>
            <person name="Lakomek N."/>
            <person name="Heimburg T."/>
            <person name="Lodrini M."/>
            <person name="Pfitzner E."/>
            <person name="Becker S."/>
        </authorList>
    </citation>
    <scope>X-RAY CRYSTALLOGRAPHY (2.2 ANGSTROMS) OF 795-808 IN COMPLEX WITH 257-385 OF NCOA1</scope>
</reference>
<reference key="13">
    <citation type="journal article" date="2023" name="J. Allergy Clin. Immunol.">
        <title>Severe allergic dysregulation due to a gain of function mutation in the transcription factor STAT6.</title>
        <authorList>
            <person name="Baris S."/>
            <person name="Benamar M."/>
            <person name="Chen Q."/>
            <person name="Catak M.C."/>
            <person name="Martinez-Blanco M."/>
            <person name="Wang M."/>
            <person name="Fong J."/>
            <person name="Massaad M.J."/>
            <person name="Sefer A.P."/>
            <person name="Kara A."/>
            <person name="Babayeva R."/>
            <person name="Eltan S.B."/>
            <person name="Yucelten A.D."/>
            <person name="Bozkurtlar E."/>
            <person name="Cinel L."/>
            <person name="Karakoc-Aydiner E."/>
            <person name="Zheng Y."/>
            <person name="Wu H."/>
            <person name="Ozen A."/>
            <person name="Schmitz-Abe K."/>
            <person name="Chatila T.A."/>
        </authorList>
    </citation>
    <scope>VARIANT HIES6 LYS-372</scope>
    <scope>INVOLVEMENT IN HIES6</scope>
    <scope>CHARACTERIZATION OF VARIANT HIES6 LYS-372</scope>
    <scope>SUBCELLULAR LOCATION</scope>
    <scope>FUNCTION</scope>
</reference>
<reference key="14">
    <citation type="journal article" date="2023" name="J. Clin. Immunol.">
        <title>Autosomal Dominant STAT6 Gain of Function Causes Severe Atopy Associated with Lymphoma.</title>
        <authorList>
            <consortium name="NIHR Bioresource-Rare Diseases Consortium"/>
            <person name="Minskaia E."/>
            <person name="Maimaris J."/>
            <person name="Jenkins P."/>
            <person name="Albuquerque A.S."/>
            <person name="Hong Y."/>
            <person name="Eleftheriou D."/>
            <person name="Gilmour K.C."/>
            <person name="Grace R."/>
            <person name="Moreira F."/>
            <person name="Grimbacher B."/>
            <person name="Morris E.C."/>
            <person name="Burns S.O."/>
        </authorList>
    </citation>
    <scope>VARIANT HIES6 HIS-419</scope>
    <scope>CHARACTERIZATION OF VARIANT HIES6 HIS-419</scope>
</reference>
<reference key="15">
    <citation type="journal article" date="2023" name="J. Exp. Med.">
        <title>Human germline heterozygous gain-of-function STAT6 variants cause severe allergic disease.</title>
        <authorList>
            <person name="Sharma M."/>
            <person name="Leung D."/>
            <person name="Momenilandi M."/>
            <person name="Jones L.C.W."/>
            <person name="Pacillo L."/>
            <person name="James A.E."/>
            <person name="Murrell J.R."/>
            <person name="Delafontaine S."/>
            <person name="Maimaris J."/>
            <person name="Vaseghi-Shanjani M."/>
            <person name="Del Bel K.L."/>
            <person name="Lu H.Y."/>
            <person name="Chua G.T."/>
            <person name="Di Cesare S."/>
            <person name="Fornes O."/>
            <person name="Liu Z."/>
            <person name="Di Matteo G."/>
            <person name="Fu M.P."/>
            <person name="Amodio D."/>
            <person name="Tam I.Y.S."/>
            <person name="Chan G.S.W."/>
            <person name="Sharma A.A."/>
            <person name="Dalmann J."/>
            <person name="van der Lee R."/>
            <person name="Blanchard-Rohner G."/>
            <person name="Lin S."/>
            <person name="Philippot Q."/>
            <person name="Richmond P.A."/>
            <person name="Lee J.J."/>
            <person name="Matthews A."/>
            <person name="Seear M."/>
            <person name="Turvey A.K."/>
            <person name="Philips R.L."/>
            <person name="Brown-Whitehorn T.F."/>
            <person name="Gray C.J."/>
            <person name="Izumi K."/>
            <person name="Treat J.R."/>
            <person name="Wood K.H."/>
            <person name="Lack J."/>
            <person name="Khleborodova A."/>
            <person name="Niemela J.E."/>
            <person name="Yang X."/>
            <person name="Liang R."/>
            <person name="Kui L."/>
            <person name="Wong C.S.M."/>
            <person name="Poon G.W.K."/>
            <person name="Hoischen A."/>
            <person name="van der Made C.I."/>
            <person name="Yang J."/>
            <person name="Chan K.W."/>
            <person name="Rosa Duque J.S.D."/>
            <person name="Lee P.P.W."/>
            <person name="Ho M.H.K."/>
            <person name="Chung B.H.Y."/>
            <person name="Le H.T.M."/>
            <person name="Yang W."/>
            <person name="Rohani P."/>
            <person name="Fouladvand A."/>
            <person name="Rokni-Zadeh H."/>
            <person name="Changi-Ashtiani M."/>
            <person name="Miryounesi M."/>
            <person name="Puel A."/>
            <person name="Shahrooei M."/>
            <person name="Finocchi A."/>
            <person name="Rossi P."/>
            <person name="Rivalta B."/>
            <person name="Cifaldi C."/>
            <person name="Novelli A."/>
            <person name="Passarelli C."/>
            <person name="Arasi S."/>
            <person name="Bullens D."/>
            <person name="Sauer K."/>
            <person name="Claeys T."/>
            <person name="Biggs C.M."/>
            <person name="Morris E.C."/>
            <person name="Rosenzweig S.D."/>
            <person name="O'Shea J.J."/>
            <person name="Wasserman W.W."/>
            <person name="Bedford H.M."/>
            <person name="van Karnebeek C.D.M."/>
            <person name="Palma P."/>
            <person name="Burns S.O."/>
            <person name="Meyts I."/>
            <person name="Casanova J.L."/>
            <person name="Lyons J.J."/>
            <person name="Parvaneh N."/>
            <person name="Nguyen A.T.V."/>
            <person name="Cancrini C."/>
            <person name="Heimall J."/>
            <person name="Ahmed H."/>
            <person name="McKinnon M.L."/>
            <person name="Lau Y.L."/>
            <person name="Beziat V."/>
            <person name="Turvey S.E."/>
        </authorList>
    </citation>
    <scope>VARIANTS HIES6 GLN-382; GLY-419; TYR-419; HIS-419; ASN-419; ALA-419; HIS-519; ARG-595 AND ARG-643</scope>
    <scope>CHARACTERIZATION OF VARIANTS HIES6 GLN-382; GLY-419; TYR-419; ASN-419; HIS-419; ALA-419; HIS-519; ARG-595 AND ARG-643</scope>
    <scope>FUNCTION</scope>
    <scope>CHARACTERIZATION OF VARIANT VAL-321</scope>
    <scope>MUTAGENESIS OF TYR-641</scope>
</reference>
<proteinExistence type="evidence at protein level"/>
<accession>P42226</accession>
<accession>A8K316</accession>
<accession>B7ZA27</accession>
<accession>F5GXI9</accession>
<accession>Q5FBW5</accession>
<accession>Q71UP4</accession>
<dbReference type="EMBL" id="U16031">
    <property type="protein sequence ID" value="AAA57193.1"/>
    <property type="molecule type" value="mRNA"/>
</dbReference>
<dbReference type="EMBL" id="AF067575">
    <property type="protein sequence ID" value="AAC67525.1"/>
    <property type="molecule type" value="Genomic_DNA"/>
</dbReference>
<dbReference type="EMBL" id="AF067572">
    <property type="protein sequence ID" value="AAC67525.1"/>
    <property type="status" value="JOINED"/>
    <property type="molecule type" value="Genomic_DNA"/>
</dbReference>
<dbReference type="EMBL" id="AF067573">
    <property type="protein sequence ID" value="AAC67525.1"/>
    <property type="status" value="JOINED"/>
    <property type="molecule type" value="Genomic_DNA"/>
</dbReference>
<dbReference type="EMBL" id="AB103089">
    <property type="protein sequence ID" value="BAD89432.1"/>
    <property type="molecule type" value="mRNA"/>
</dbReference>
<dbReference type="EMBL" id="AK290431">
    <property type="protein sequence ID" value="BAF83120.1"/>
    <property type="molecule type" value="mRNA"/>
</dbReference>
<dbReference type="EMBL" id="AK316142">
    <property type="protein sequence ID" value="BAH14513.1"/>
    <property type="molecule type" value="mRNA"/>
</dbReference>
<dbReference type="EMBL" id="AF417842">
    <property type="protein sequence ID" value="AAL06595.1"/>
    <property type="molecule type" value="Genomic_DNA"/>
</dbReference>
<dbReference type="EMBL" id="AC023237">
    <property type="status" value="NOT_ANNOTATED_CDS"/>
    <property type="molecule type" value="Genomic_DNA"/>
</dbReference>
<dbReference type="EMBL" id="BC075852">
    <property type="protein sequence ID" value="AAH75852.1"/>
    <property type="molecule type" value="mRNA"/>
</dbReference>
<dbReference type="CCDS" id="CCDS53804.1">
    <molecule id="P42226-3"/>
</dbReference>
<dbReference type="CCDS" id="CCDS8931.1">
    <molecule id="P42226-1"/>
</dbReference>
<dbReference type="PIR" id="A54740">
    <property type="entry name" value="A54740"/>
</dbReference>
<dbReference type="RefSeq" id="NP_001171549.1">
    <molecule id="P42226-1"/>
    <property type="nucleotide sequence ID" value="NM_001178078.2"/>
</dbReference>
<dbReference type="RefSeq" id="NP_001171550.1">
    <molecule id="P42226-1"/>
    <property type="nucleotide sequence ID" value="NM_001178079.2"/>
</dbReference>
<dbReference type="RefSeq" id="NP_001171551.1">
    <molecule id="P42226-3"/>
    <property type="nucleotide sequence ID" value="NM_001178080.2"/>
</dbReference>
<dbReference type="RefSeq" id="NP_001171552.1">
    <molecule id="P42226-3"/>
    <property type="nucleotide sequence ID" value="NM_001178081.2"/>
</dbReference>
<dbReference type="RefSeq" id="NP_003144.3">
    <molecule id="P42226-1"/>
    <property type="nucleotide sequence ID" value="NM_003153.4"/>
</dbReference>
<dbReference type="RefSeq" id="XP_006719638.1">
    <property type="nucleotide sequence ID" value="XM_006719575.2"/>
</dbReference>
<dbReference type="RefSeq" id="XP_047285429.1">
    <molecule id="P42226-1"/>
    <property type="nucleotide sequence ID" value="XM_047429473.1"/>
</dbReference>
<dbReference type="RefSeq" id="XP_047285430.1">
    <molecule id="P42226-1"/>
    <property type="nucleotide sequence ID" value="XM_047429474.1"/>
</dbReference>
<dbReference type="RefSeq" id="XP_047285431.1">
    <molecule id="P42226-1"/>
    <property type="nucleotide sequence ID" value="XM_047429475.1"/>
</dbReference>
<dbReference type="RefSeq" id="XP_054229068.1">
    <molecule id="P42226-1"/>
    <property type="nucleotide sequence ID" value="XM_054373093.1"/>
</dbReference>
<dbReference type="RefSeq" id="XP_054229069.1">
    <molecule id="P42226-1"/>
    <property type="nucleotide sequence ID" value="XM_054373094.1"/>
</dbReference>
<dbReference type="RefSeq" id="XP_054229070.1">
    <molecule id="P42226-1"/>
    <property type="nucleotide sequence ID" value="XM_054373095.1"/>
</dbReference>
<dbReference type="PDB" id="1OJ5">
    <property type="method" value="X-ray"/>
    <property type="resolution" value="2.20 A"/>
    <property type="chains" value="B=795-808"/>
</dbReference>
<dbReference type="PDB" id="4Y5U">
    <property type="method" value="X-ray"/>
    <property type="resolution" value="2.71 A"/>
    <property type="chains" value="A/B=113-658"/>
</dbReference>
<dbReference type="PDB" id="4Y5W">
    <property type="method" value="X-ray"/>
    <property type="resolution" value="3.10 A"/>
    <property type="chains" value="A/B/C/D=113-658"/>
</dbReference>
<dbReference type="PDB" id="5D39">
    <property type="method" value="X-ray"/>
    <property type="resolution" value="3.20 A"/>
    <property type="chains" value="A/B/C/D=123-658"/>
</dbReference>
<dbReference type="PDB" id="5NWM">
    <property type="method" value="NMR"/>
    <property type="chains" value="B=783-814"/>
</dbReference>
<dbReference type="PDB" id="5NWX">
    <property type="method" value="X-ray"/>
    <property type="resolution" value="2.51 A"/>
    <property type="chains" value="B=783-814"/>
</dbReference>
<dbReference type="PDB" id="9BIG">
    <property type="method" value="X-ray"/>
    <property type="resolution" value="3.30 A"/>
    <property type="chains" value="A=113-658"/>
</dbReference>
<dbReference type="PDBsum" id="1OJ5"/>
<dbReference type="PDBsum" id="4Y5U"/>
<dbReference type="PDBsum" id="4Y5W"/>
<dbReference type="PDBsum" id="5D39"/>
<dbReference type="PDBsum" id="5NWM"/>
<dbReference type="PDBsum" id="5NWX"/>
<dbReference type="PDBsum" id="9BIG"/>
<dbReference type="SMR" id="P42226"/>
<dbReference type="BioGRID" id="112655">
    <property type="interactions" value="77"/>
</dbReference>
<dbReference type="ComplexPortal" id="CPX-6047">
    <property type="entry name" value="STAT2/STAT6 complex"/>
</dbReference>
<dbReference type="ComplexPortal" id="CPX-6051">
    <property type="entry name" value="STAT6 homodimer"/>
</dbReference>
<dbReference type="CORUM" id="P42226"/>
<dbReference type="DIP" id="DIP-39855N"/>
<dbReference type="FunCoup" id="P42226">
    <property type="interactions" value="1901"/>
</dbReference>
<dbReference type="IntAct" id="P42226">
    <property type="interactions" value="61"/>
</dbReference>
<dbReference type="MINT" id="P42226"/>
<dbReference type="STRING" id="9606.ENSP00000300134"/>
<dbReference type="BindingDB" id="P42226"/>
<dbReference type="ChEMBL" id="CHEMBL5401"/>
<dbReference type="GuidetoPHARMACOLOGY" id="2993"/>
<dbReference type="GlyGen" id="P42226">
    <property type="glycosylation" value="2 sites, 1 O-linked glycan (1 site)"/>
</dbReference>
<dbReference type="iPTMnet" id="P42226"/>
<dbReference type="MetOSite" id="P42226"/>
<dbReference type="PhosphoSitePlus" id="P42226"/>
<dbReference type="BioMuta" id="STAT6"/>
<dbReference type="DMDM" id="1174459"/>
<dbReference type="CPTAC" id="CPTAC-1639"/>
<dbReference type="CPTAC" id="CPTAC-5965"/>
<dbReference type="jPOST" id="P42226"/>
<dbReference type="MassIVE" id="P42226"/>
<dbReference type="PaxDb" id="9606-ENSP00000300134"/>
<dbReference type="PeptideAtlas" id="P42226"/>
<dbReference type="ProteomicsDB" id="24436"/>
<dbReference type="ProteomicsDB" id="55493">
    <molecule id="P42226-1"/>
</dbReference>
<dbReference type="ProteomicsDB" id="55494">
    <molecule id="P42226-2"/>
</dbReference>
<dbReference type="Pumba" id="P42226"/>
<dbReference type="ABCD" id="P42226">
    <property type="antibodies" value="2 sequenced antibodies"/>
</dbReference>
<dbReference type="Antibodypedia" id="662">
    <property type="antibodies" value="1511 antibodies from 51 providers"/>
</dbReference>
<dbReference type="CPTC" id="P42226">
    <property type="antibodies" value="1 antibody"/>
</dbReference>
<dbReference type="DNASU" id="6778"/>
<dbReference type="Ensembl" id="ENST00000300134.8">
    <molecule id="P42226-1"/>
    <property type="protein sequence ID" value="ENSP00000300134.3"/>
    <property type="gene ID" value="ENSG00000166888.13"/>
</dbReference>
<dbReference type="Ensembl" id="ENST00000454075.7">
    <molecule id="P42226-1"/>
    <property type="protein sequence ID" value="ENSP00000401486.3"/>
    <property type="gene ID" value="ENSG00000166888.13"/>
</dbReference>
<dbReference type="Ensembl" id="ENST00000537215.6">
    <molecule id="P42226-3"/>
    <property type="protein sequence ID" value="ENSP00000444530.2"/>
    <property type="gene ID" value="ENSG00000166888.13"/>
</dbReference>
<dbReference type="Ensembl" id="ENST00000538913.6">
    <molecule id="P42226-3"/>
    <property type="protein sequence ID" value="ENSP00000445409.2"/>
    <property type="gene ID" value="ENSG00000166888.13"/>
</dbReference>
<dbReference type="Ensembl" id="ENST00000543873.6">
    <molecule id="P42226-1"/>
    <property type="protein sequence ID" value="ENSP00000438451.2"/>
    <property type="gene ID" value="ENSG00000166888.13"/>
</dbReference>
<dbReference type="Ensembl" id="ENST00000553275.2">
    <molecule id="P42226-1"/>
    <property type="protein sequence ID" value="ENSP00000450732.2"/>
    <property type="gene ID" value="ENSG00000166888.13"/>
</dbReference>
<dbReference type="Ensembl" id="ENST00000553397.6">
    <molecule id="P42226-1"/>
    <property type="protein sequence ID" value="ENSP00000452203.2"/>
    <property type="gene ID" value="ENSG00000166888.13"/>
</dbReference>
<dbReference type="Ensembl" id="ENST00000553499.6">
    <molecule id="P42226-1"/>
    <property type="protein sequence ID" value="ENSP00000451074.2"/>
    <property type="gene ID" value="ENSG00000166888.13"/>
</dbReference>
<dbReference type="Ensembl" id="ENST00000555849.6">
    <molecule id="P42226-1"/>
    <property type="protein sequence ID" value="ENSP00000452394.2"/>
    <property type="gene ID" value="ENSG00000166888.13"/>
</dbReference>
<dbReference type="Ensembl" id="ENST00000556155.5">
    <molecule id="P42226-1"/>
    <property type="protein sequence ID" value="ENSP00000451742.1"/>
    <property type="gene ID" value="ENSG00000166888.13"/>
</dbReference>
<dbReference type="Ensembl" id="ENST00000557635.6">
    <molecule id="P42226-1"/>
    <property type="protein sequence ID" value="ENSP00000450747.2"/>
    <property type="gene ID" value="ENSG00000166888.13"/>
</dbReference>
<dbReference type="Ensembl" id="ENST00000714371.1">
    <molecule id="P42226-1"/>
    <property type="protein sequence ID" value="ENSP00000519638.1"/>
    <property type="gene ID" value="ENSG00000166888.13"/>
</dbReference>
<dbReference type="Ensembl" id="ENST00000714373.1">
    <molecule id="P42226-1"/>
    <property type="protein sequence ID" value="ENSP00000519640.1"/>
    <property type="gene ID" value="ENSG00000166888.13"/>
</dbReference>
<dbReference type="GeneID" id="6778"/>
<dbReference type="KEGG" id="hsa:6778"/>
<dbReference type="MANE-Select" id="ENST00000300134.8">
    <property type="protein sequence ID" value="ENSP00000300134.3"/>
    <property type="RefSeq nucleotide sequence ID" value="NM_003153.5"/>
    <property type="RefSeq protein sequence ID" value="NP_003144.3"/>
</dbReference>
<dbReference type="UCSC" id="uc001sna.5">
    <molecule id="P42226-1"/>
    <property type="organism name" value="human"/>
</dbReference>
<dbReference type="AGR" id="HGNC:11368"/>
<dbReference type="CTD" id="6778"/>
<dbReference type="DisGeNET" id="6778"/>
<dbReference type="GeneCards" id="STAT6"/>
<dbReference type="HGNC" id="HGNC:11368">
    <property type="gene designation" value="STAT6"/>
</dbReference>
<dbReference type="HPA" id="ENSG00000166888">
    <property type="expression patterns" value="Low tissue specificity"/>
</dbReference>
<dbReference type="MalaCards" id="STAT6"/>
<dbReference type="MIM" id="601512">
    <property type="type" value="gene"/>
</dbReference>
<dbReference type="MIM" id="620532">
    <property type="type" value="phenotype"/>
</dbReference>
<dbReference type="neXtProt" id="NX_P42226"/>
<dbReference type="OpenTargets" id="ENSG00000166888"/>
<dbReference type="Orphanet" id="2126">
    <property type="disease" value="Solitary fibrous tumor"/>
</dbReference>
<dbReference type="PharmGKB" id="PA339"/>
<dbReference type="VEuPathDB" id="HostDB:ENSG00000166888"/>
<dbReference type="eggNOG" id="KOG3667">
    <property type="taxonomic scope" value="Eukaryota"/>
</dbReference>
<dbReference type="GeneTree" id="ENSGT01080000257420"/>
<dbReference type="HOGENOM" id="CLU_014189_2_1_1"/>
<dbReference type="InParanoid" id="P42226"/>
<dbReference type="OrthoDB" id="19300at2759"/>
<dbReference type="PAN-GO" id="P42226">
    <property type="GO annotations" value="9 GO annotations based on evolutionary models"/>
</dbReference>
<dbReference type="PhylomeDB" id="P42226"/>
<dbReference type="TreeFam" id="TF318648"/>
<dbReference type="PathwayCommons" id="P42226"/>
<dbReference type="Reactome" id="R-HSA-186763">
    <property type="pathway name" value="Downstream signal transduction"/>
</dbReference>
<dbReference type="Reactome" id="R-HSA-3249367">
    <property type="pathway name" value="STAT6-mediated induction of chemokines"/>
</dbReference>
<dbReference type="Reactome" id="R-HSA-6785807">
    <property type="pathway name" value="Interleukin-4 and Interleukin-13 signaling"/>
</dbReference>
<dbReference type="SignaLink" id="P42226"/>
<dbReference type="SIGNOR" id="P42226"/>
<dbReference type="BioGRID-ORCS" id="6778">
    <property type="hits" value="23 hits in 1185 CRISPR screens"/>
</dbReference>
<dbReference type="ChiTaRS" id="STAT6">
    <property type="organism name" value="human"/>
</dbReference>
<dbReference type="EvolutionaryTrace" id="P42226"/>
<dbReference type="GeneWiki" id="STAT6"/>
<dbReference type="GenomeRNAi" id="6778"/>
<dbReference type="Pharos" id="P42226">
    <property type="development level" value="Tchem"/>
</dbReference>
<dbReference type="PRO" id="PR:P42226"/>
<dbReference type="Proteomes" id="UP000005640">
    <property type="component" value="Chromosome 12"/>
</dbReference>
<dbReference type="RNAct" id="P42226">
    <property type="molecule type" value="protein"/>
</dbReference>
<dbReference type="Bgee" id="ENSG00000166888">
    <property type="expression patterns" value="Expressed in granulocyte and 201 other cell types or tissues"/>
</dbReference>
<dbReference type="ExpressionAtlas" id="P42226">
    <property type="expression patterns" value="baseline and differential"/>
</dbReference>
<dbReference type="GO" id="GO:0000785">
    <property type="term" value="C:chromatin"/>
    <property type="evidence" value="ECO:0000247"/>
    <property type="project" value="NTNU_SB"/>
</dbReference>
<dbReference type="GO" id="GO:0005737">
    <property type="term" value="C:cytoplasm"/>
    <property type="evidence" value="ECO:0000318"/>
    <property type="project" value="GO_Central"/>
</dbReference>
<dbReference type="GO" id="GO:0005829">
    <property type="term" value="C:cytosol"/>
    <property type="evidence" value="ECO:0000314"/>
    <property type="project" value="HPA"/>
</dbReference>
<dbReference type="GO" id="GO:0005654">
    <property type="term" value="C:nucleoplasm"/>
    <property type="evidence" value="ECO:0000314"/>
    <property type="project" value="HPA"/>
</dbReference>
<dbReference type="GO" id="GO:0005634">
    <property type="term" value="C:nucleus"/>
    <property type="evidence" value="ECO:0000314"/>
    <property type="project" value="UniProt"/>
</dbReference>
<dbReference type="GO" id="GO:0090575">
    <property type="term" value="C:RNA polymerase II transcription regulator complex"/>
    <property type="evidence" value="ECO:0000353"/>
    <property type="project" value="ComplexPortal"/>
</dbReference>
<dbReference type="GO" id="GO:0001228">
    <property type="term" value="F:DNA-binding transcription activator activity, RNA polymerase II-specific"/>
    <property type="evidence" value="ECO:0000314"/>
    <property type="project" value="NTNU_SB"/>
</dbReference>
<dbReference type="GO" id="GO:0003700">
    <property type="term" value="F:DNA-binding transcription factor activity"/>
    <property type="evidence" value="ECO:0000314"/>
    <property type="project" value="UniProt"/>
</dbReference>
<dbReference type="GO" id="GO:0000981">
    <property type="term" value="F:DNA-binding transcription factor activity, RNA polymerase II-specific"/>
    <property type="evidence" value="ECO:0000315"/>
    <property type="project" value="UniProtKB"/>
</dbReference>
<dbReference type="GO" id="GO:0042802">
    <property type="term" value="F:identical protein binding"/>
    <property type="evidence" value="ECO:0000353"/>
    <property type="project" value="IntAct"/>
</dbReference>
<dbReference type="GO" id="GO:0019903">
    <property type="term" value="F:protein phosphatase binding"/>
    <property type="evidence" value="ECO:0000353"/>
    <property type="project" value="UniProtKB"/>
</dbReference>
<dbReference type="GO" id="GO:0000978">
    <property type="term" value="F:RNA polymerase II cis-regulatory region sequence-specific DNA binding"/>
    <property type="evidence" value="ECO:0000318"/>
    <property type="project" value="GO_Central"/>
</dbReference>
<dbReference type="GO" id="GO:0000977">
    <property type="term" value="F:RNA polymerase II transcription regulatory region sequence-specific DNA binding"/>
    <property type="evidence" value="ECO:0000314"/>
    <property type="project" value="NTNU_SB"/>
</dbReference>
<dbReference type="GO" id="GO:0001223">
    <property type="term" value="F:transcription coactivator binding"/>
    <property type="evidence" value="ECO:0000269"/>
    <property type="project" value="DisProt"/>
</dbReference>
<dbReference type="GO" id="GO:0007259">
    <property type="term" value="P:cell surface receptor signaling pathway via JAK-STAT"/>
    <property type="evidence" value="ECO:0000315"/>
    <property type="project" value="ARUK-UCL"/>
</dbReference>
<dbReference type="GO" id="GO:0019221">
    <property type="term" value="P:cytokine-mediated signaling pathway"/>
    <property type="evidence" value="ECO:0000315"/>
    <property type="project" value="UniProtKB"/>
</dbReference>
<dbReference type="GO" id="GO:0006952">
    <property type="term" value="P:defense response"/>
    <property type="evidence" value="ECO:0000318"/>
    <property type="project" value="GO_Central"/>
</dbReference>
<dbReference type="GO" id="GO:0060397">
    <property type="term" value="P:growth hormone receptor signaling pathway via JAK-STAT"/>
    <property type="evidence" value="ECO:0000318"/>
    <property type="project" value="GO_Central"/>
</dbReference>
<dbReference type="GO" id="GO:0035771">
    <property type="term" value="P:interleukin-4-mediated signaling pathway"/>
    <property type="evidence" value="ECO:0000314"/>
    <property type="project" value="UniProt"/>
</dbReference>
<dbReference type="GO" id="GO:0048289">
    <property type="term" value="P:isotype switching to IgE isotypes"/>
    <property type="evidence" value="ECO:0007669"/>
    <property type="project" value="Ensembl"/>
</dbReference>
<dbReference type="GO" id="GO:0033598">
    <property type="term" value="P:mammary gland epithelial cell proliferation"/>
    <property type="evidence" value="ECO:0007669"/>
    <property type="project" value="Ensembl"/>
</dbReference>
<dbReference type="GO" id="GO:0060443">
    <property type="term" value="P:mammary gland morphogenesis"/>
    <property type="evidence" value="ECO:0007669"/>
    <property type="project" value="Ensembl"/>
</dbReference>
<dbReference type="GO" id="GO:0000122">
    <property type="term" value="P:negative regulation of transcription by RNA polymerase II"/>
    <property type="evidence" value="ECO:0007669"/>
    <property type="project" value="Ensembl"/>
</dbReference>
<dbReference type="GO" id="GO:0002829">
    <property type="term" value="P:negative regulation of type 2 immune response"/>
    <property type="evidence" value="ECO:0007669"/>
    <property type="project" value="Ensembl"/>
</dbReference>
<dbReference type="GO" id="GO:0120162">
    <property type="term" value="P:positive regulation of cold-induced thermogenesis"/>
    <property type="evidence" value="ECO:0000250"/>
    <property type="project" value="YuBioLab"/>
</dbReference>
<dbReference type="GO" id="GO:0048295">
    <property type="term" value="P:positive regulation of isotype switching to IgE isotypes"/>
    <property type="evidence" value="ECO:0007669"/>
    <property type="project" value="Ensembl"/>
</dbReference>
<dbReference type="GO" id="GO:0045944">
    <property type="term" value="P:positive regulation of transcription by RNA polymerase II"/>
    <property type="evidence" value="ECO:0000314"/>
    <property type="project" value="NTNU_SB"/>
</dbReference>
<dbReference type="GO" id="GO:0042127">
    <property type="term" value="P:regulation of cell population proliferation"/>
    <property type="evidence" value="ECO:0000318"/>
    <property type="project" value="GO_Central"/>
</dbReference>
<dbReference type="GO" id="GO:0070666">
    <property type="term" value="P:regulation of mast cell proliferation"/>
    <property type="evidence" value="ECO:0007669"/>
    <property type="project" value="Ensembl"/>
</dbReference>
<dbReference type="GO" id="GO:0006357">
    <property type="term" value="P:regulation of transcription by RNA polymerase II"/>
    <property type="evidence" value="ECO:0000318"/>
    <property type="project" value="GO_Central"/>
</dbReference>
<dbReference type="GO" id="GO:0043434">
    <property type="term" value="P:response to peptide hormone"/>
    <property type="evidence" value="ECO:0000318"/>
    <property type="project" value="GO_Central"/>
</dbReference>
<dbReference type="GO" id="GO:0002296">
    <property type="term" value="P:T-helper 1 cell lineage commitment"/>
    <property type="evidence" value="ECO:0007669"/>
    <property type="project" value="Ensembl"/>
</dbReference>
<dbReference type="CDD" id="cd10377">
    <property type="entry name" value="SH2_STAT6"/>
    <property type="match status" value="1"/>
</dbReference>
<dbReference type="CDD" id="cd16856">
    <property type="entry name" value="STAT6_CCD"/>
    <property type="match status" value="1"/>
</dbReference>
<dbReference type="CDD" id="cd16850">
    <property type="entry name" value="STAT6_DBD"/>
    <property type="match status" value="1"/>
</dbReference>
<dbReference type="DisProt" id="DP02262"/>
<dbReference type="FunFam" id="1.10.238.10:FF:000029">
    <property type="entry name" value="Signal transducer and transcription activator 6"/>
    <property type="match status" value="1"/>
</dbReference>
<dbReference type="FunFam" id="1.20.1050.20:FF:000004">
    <property type="entry name" value="Signal transducer and transcription activator 6"/>
    <property type="match status" value="1"/>
</dbReference>
<dbReference type="FunFam" id="2.60.40.630:FF:000003">
    <property type="entry name" value="Signal transducer and transcription activator 6"/>
    <property type="match status" value="1"/>
</dbReference>
<dbReference type="FunFam" id="3.30.505.10:FF:000048">
    <property type="entry name" value="Signal transducer and transcription activator 6"/>
    <property type="match status" value="1"/>
</dbReference>
<dbReference type="Gene3D" id="1.10.238.10">
    <property type="entry name" value="EF-hand"/>
    <property type="match status" value="1"/>
</dbReference>
<dbReference type="Gene3D" id="3.30.505.10">
    <property type="entry name" value="SH2 domain"/>
    <property type="match status" value="1"/>
</dbReference>
<dbReference type="Gene3D" id="1.20.1050.20">
    <property type="entry name" value="STAT transcription factor, all-alpha domain"/>
    <property type="match status" value="1"/>
</dbReference>
<dbReference type="Gene3D" id="2.60.40.630">
    <property type="entry name" value="STAT transcription factor, DNA-binding domain"/>
    <property type="match status" value="1"/>
</dbReference>
<dbReference type="IDEAL" id="IID00047"/>
<dbReference type="InterPro" id="IPR008967">
    <property type="entry name" value="p53-like_TF_DNA-bd_sf"/>
</dbReference>
<dbReference type="InterPro" id="IPR000980">
    <property type="entry name" value="SH2"/>
</dbReference>
<dbReference type="InterPro" id="IPR036860">
    <property type="entry name" value="SH2_dom_sf"/>
</dbReference>
<dbReference type="InterPro" id="IPR001217">
    <property type="entry name" value="STAT"/>
</dbReference>
<dbReference type="InterPro" id="IPR028187">
    <property type="entry name" value="STAT6_C"/>
</dbReference>
<dbReference type="InterPro" id="IPR035857">
    <property type="entry name" value="STAT6_SH2"/>
</dbReference>
<dbReference type="InterPro" id="IPR048988">
    <property type="entry name" value="STAT_linker"/>
</dbReference>
<dbReference type="InterPro" id="IPR036535">
    <property type="entry name" value="STAT_N_sf"/>
</dbReference>
<dbReference type="InterPro" id="IPR013800">
    <property type="entry name" value="STAT_TF_alpha"/>
</dbReference>
<dbReference type="InterPro" id="IPR015988">
    <property type="entry name" value="STAT_TF_coiled-coil"/>
</dbReference>
<dbReference type="InterPro" id="IPR013801">
    <property type="entry name" value="STAT_TF_DNA-bd"/>
</dbReference>
<dbReference type="InterPro" id="IPR012345">
    <property type="entry name" value="STAT_TF_DNA-bd_N"/>
</dbReference>
<dbReference type="InterPro" id="IPR013799">
    <property type="entry name" value="STAT_TF_prot_interaction"/>
</dbReference>
<dbReference type="PANTHER" id="PTHR11801">
    <property type="entry name" value="SIGNAL TRANSDUCER AND ACTIVATOR OF TRANSCRIPTION"/>
    <property type="match status" value="1"/>
</dbReference>
<dbReference type="Pfam" id="PF00017">
    <property type="entry name" value="SH2"/>
    <property type="match status" value="1"/>
</dbReference>
<dbReference type="Pfam" id="PF14596">
    <property type="entry name" value="STAT6_C"/>
    <property type="match status" value="1"/>
</dbReference>
<dbReference type="Pfam" id="PF01017">
    <property type="entry name" value="STAT_alpha"/>
    <property type="match status" value="1"/>
</dbReference>
<dbReference type="Pfam" id="PF02864">
    <property type="entry name" value="STAT_bind"/>
    <property type="match status" value="1"/>
</dbReference>
<dbReference type="Pfam" id="PF02865">
    <property type="entry name" value="STAT_int"/>
    <property type="match status" value="1"/>
</dbReference>
<dbReference type="Pfam" id="PF21354">
    <property type="entry name" value="STAT_linker"/>
    <property type="match status" value="1"/>
</dbReference>
<dbReference type="SMART" id="SM00252">
    <property type="entry name" value="SH2"/>
    <property type="match status" value="1"/>
</dbReference>
<dbReference type="SMART" id="SM00964">
    <property type="entry name" value="STAT_int"/>
    <property type="match status" value="1"/>
</dbReference>
<dbReference type="SUPFAM" id="SSF49417">
    <property type="entry name" value="p53-like transcription factors"/>
    <property type="match status" value="1"/>
</dbReference>
<dbReference type="SUPFAM" id="SSF55550">
    <property type="entry name" value="SH2 domain"/>
    <property type="match status" value="1"/>
</dbReference>
<dbReference type="SUPFAM" id="SSF47655">
    <property type="entry name" value="STAT"/>
    <property type="match status" value="1"/>
</dbReference>
<dbReference type="SUPFAM" id="SSF48092">
    <property type="entry name" value="Transcription factor STAT-4 N-domain"/>
    <property type="match status" value="1"/>
</dbReference>
<dbReference type="PROSITE" id="PS50001">
    <property type="entry name" value="SH2"/>
    <property type="match status" value="1"/>
</dbReference>
<protein>
    <recommendedName>
        <fullName>Signal transducer and activator of transcription 6</fullName>
    </recommendedName>
    <alternativeName>
        <fullName>IL-4 Stat</fullName>
    </alternativeName>
</protein>
<feature type="initiator methionine" description="Removed" evidence="16">
    <location>
        <position position="1"/>
    </location>
</feature>
<feature type="chain" id="PRO_0000182433" description="Signal transducer and activator of transcription 6">
    <location>
        <begin position="2"/>
        <end position="847"/>
    </location>
</feature>
<feature type="domain" description="SH2" evidence="3">
    <location>
        <begin position="517"/>
        <end position="632"/>
    </location>
</feature>
<feature type="region of interest" description="Disordered" evidence="4">
    <location>
        <begin position="809"/>
        <end position="847"/>
    </location>
</feature>
<feature type="short sequence motif" description="LXXLL motif">
    <location>
        <begin position="802"/>
        <end position="806"/>
    </location>
</feature>
<feature type="modified residue" description="N-acetylserine" evidence="16">
    <location>
        <position position="2"/>
    </location>
</feature>
<feature type="modified residue" description="Phosphotyrosine; by JAK" evidence="8">
    <location>
        <position position="641"/>
    </location>
</feature>
<feature type="splice variant" id="VSP_031871" description="In isoform 2." evidence="14">
    <location>
        <begin position="1"/>
        <end position="174"/>
    </location>
</feature>
<feature type="splice variant" id="VSP_045282" description="In isoform 3." evidence="13">
    <location>
        <begin position="1"/>
        <end position="110"/>
    </location>
</feature>
<feature type="splice variant" id="VSP_031872" description="In isoform 2." evidence="14">
    <original>PSE</original>
    <variation>MEQ</variation>
    <location>
        <begin position="175"/>
        <end position="177"/>
    </location>
</feature>
<feature type="sequence variant" id="VAR_013094" description="In dbSNP:rs3024952." evidence="12">
    <original>M</original>
    <variation>R</variation>
    <location>
        <position position="181"/>
    </location>
</feature>
<feature type="sequence variant" id="VAR_089075" description="Does not affect DNA-binding transcription factor activity; does not affect STAT6 phosphorylation; dbSNP:rs767707263." evidence="10">
    <original>A</original>
    <variation>V</variation>
    <location>
        <position position="321"/>
    </location>
</feature>
<feature type="sequence variant" id="VAR_089076" description="In HIES6; likely pathogenic; increased DNA-binding transcription factor activity; increased STAT6 phosphorylation after stimulation with IL4." evidence="9">
    <original>E</original>
    <variation>K</variation>
    <location>
        <position position="372"/>
    </location>
</feature>
<feature type="sequence variant" id="VAR_089077" description="In HIES6; likely pathogenic; gain of function in interleukin-4-mediated signaling pathway; increased DNA-binding transcription factor activity; increased STAT6 phosphorylation at baseline and after stimulation with IL4." evidence="10">
    <original>E</original>
    <variation>Q</variation>
    <location>
        <position position="382"/>
    </location>
</feature>
<feature type="sequence variant" id="VAR_089078" description="In HIES6; likely pathogenic; increased DNA-binding transcription factor activity; increased STAT6 phosphorylation at baseline and after stimulation with IL4." evidence="10">
    <original>D</original>
    <variation>A</variation>
    <location>
        <position position="419"/>
    </location>
</feature>
<feature type="sequence variant" id="VAR_089079" description="In HIES6; likely pathogenic; gain of function in interleukin-4-mediated signaling pathway; increased DNA-binding transcription factor activity; increased STAT6 phosphorylation at baseline and after stimulation with IL4." evidence="10">
    <original>D</original>
    <variation>G</variation>
    <location>
        <position position="419"/>
    </location>
</feature>
<feature type="sequence variant" id="VAR_089080" description="In HIES6; likely pathogenic; gain of function in interleukin-4-mediated signaling pathway; increased DNA-binding transcription factor activity; increased protein abundance in patient-derived fibroblasts." evidence="10 11">
    <original>D</original>
    <variation>H</variation>
    <location>
        <position position="419"/>
    </location>
</feature>
<feature type="sequence variant" id="VAR_059812" description="In HIES6; likely pathogenic; increased DNA-binding transcription factor activity; increased STAT6 phosphorylation at baseline and after stimulation with IL4; dbSNP:rs11172102." evidence="10">
    <original>D</original>
    <variation>N</variation>
    <location>
        <position position="419"/>
    </location>
</feature>
<feature type="sequence variant" id="VAR_089081" description="In HIES6; likely pathogenic; increased DNA-binding transcription factor activity; increased STAT6 phosphorylation at baseline and after stimulation with IL4." evidence="10">
    <original>D</original>
    <variation>Y</variation>
    <location>
        <position position="419"/>
    </location>
</feature>
<feature type="sequence variant" id="VAR_089082" description="In HIES6; likely pathogenic; increased DNA-binding transcription factor activity; increased STAT6 phosphorylation at baseline and after stimulation with IL4." evidence="10">
    <original>D</original>
    <variation>H</variation>
    <location>
        <position position="519"/>
    </location>
</feature>
<feature type="sequence variant" id="VAR_089083" description="In HIES6; likely pathogenic; increased DNA-binding transcription factor activity; increased STAT6 phosphorylation at baseline and after stimulation with IL4." evidence="10">
    <original>K</original>
    <variation>R</variation>
    <location>
        <position position="595"/>
    </location>
</feature>
<feature type="sequence variant" id="VAR_089084" description="In HIES6; likely pathogenic; increased DNA-binding transcription factor activity." evidence="10">
    <original>P</original>
    <variation>R</variation>
    <location>
        <position position="643"/>
    </location>
</feature>
<feature type="mutagenesis site" description="Abolishes phosphorylation. Loss of DNA-binding transcription factor activity." evidence="10">
    <original>Y</original>
    <variation>F</variation>
    <location>
        <position position="641"/>
    </location>
</feature>
<feature type="mutagenesis site" description="Abolishes the interaction with NCOA1; when associated with A-805." evidence="5">
    <original>L</original>
    <variation>A</variation>
    <location>
        <position position="802"/>
    </location>
</feature>
<feature type="mutagenesis site" description="Abolishes the interaction with NCOA1; when associated with A-802." evidence="5">
    <original>L</original>
    <variation>A</variation>
    <location>
        <position position="805"/>
    </location>
</feature>
<feature type="sequence conflict" description="In Ref. 2; AAC67525." evidence="15" ref="2">
    <original>E</original>
    <variation>Q</variation>
    <location>
        <position position="149"/>
    </location>
</feature>
<feature type="sequence conflict" description="In Ref. 4; BAH14513." evidence="15" ref="4">
    <original>G</original>
    <variation>D</variation>
    <location>
        <position position="246"/>
    </location>
</feature>
<feature type="sequence conflict" description="In Ref. 2; AAC67525." evidence="15" ref="2">
    <original>S</original>
    <variation>N</variation>
    <location>
        <position position="733"/>
    </location>
</feature>
<feature type="helix" evidence="18">
    <location>
        <begin position="132"/>
        <end position="147"/>
    </location>
</feature>
<feature type="helix" evidence="20">
    <location>
        <begin position="148"/>
        <end position="150"/>
    </location>
</feature>
<feature type="helix" evidence="18">
    <location>
        <begin position="186"/>
        <end position="211"/>
    </location>
</feature>
<feature type="turn" evidence="18">
    <location>
        <begin position="212"/>
        <end position="214"/>
    </location>
</feature>
<feature type="helix" evidence="18">
    <location>
        <begin position="222"/>
        <end position="241"/>
    </location>
</feature>
<feature type="strand" evidence="19">
    <location>
        <begin position="244"/>
        <end position="246"/>
    </location>
</feature>
<feature type="helix" evidence="18">
    <location>
        <begin position="256"/>
        <end position="271"/>
    </location>
</feature>
<feature type="strand" evidence="18">
    <location>
        <begin position="272"/>
        <end position="277"/>
    </location>
</feature>
<feature type="strand" evidence="18">
    <location>
        <begin position="281"/>
        <end position="284"/>
    </location>
</feature>
<feature type="strand" evidence="18">
    <location>
        <begin position="288"/>
        <end position="295"/>
    </location>
</feature>
<feature type="helix" evidence="18">
    <location>
        <begin position="298"/>
        <end position="301"/>
    </location>
</feature>
<feature type="strand" evidence="18">
    <location>
        <begin position="310"/>
        <end position="316"/>
    </location>
</feature>
<feature type="turn" evidence="18">
    <location>
        <begin position="318"/>
        <end position="321"/>
    </location>
</feature>
<feature type="strand" evidence="18">
    <location>
        <begin position="340"/>
        <end position="342"/>
    </location>
</feature>
<feature type="strand" evidence="18">
    <location>
        <begin position="344"/>
        <end position="346"/>
    </location>
</feature>
<feature type="strand" evidence="18">
    <location>
        <begin position="348"/>
        <end position="350"/>
    </location>
</feature>
<feature type="turn" evidence="18">
    <location>
        <begin position="351"/>
        <end position="354"/>
    </location>
</feature>
<feature type="strand" evidence="18">
    <location>
        <begin position="355"/>
        <end position="365"/>
    </location>
</feature>
<feature type="helix" evidence="19">
    <location>
        <begin position="379"/>
        <end position="381"/>
    </location>
</feature>
<feature type="strand" evidence="18">
    <location>
        <begin position="384"/>
        <end position="392"/>
    </location>
</feature>
<feature type="strand" evidence="18">
    <location>
        <begin position="401"/>
        <end position="406"/>
    </location>
</feature>
<feature type="strand" evidence="18">
    <location>
        <begin position="410"/>
        <end position="413"/>
    </location>
</feature>
<feature type="strand" evidence="18">
    <location>
        <begin position="415"/>
        <end position="417"/>
    </location>
</feature>
<feature type="helix" evidence="18">
    <location>
        <begin position="420"/>
        <end position="431"/>
    </location>
</feature>
<feature type="strand" evidence="18">
    <location>
        <begin position="444"/>
        <end position="447"/>
    </location>
</feature>
<feature type="helix" evidence="18">
    <location>
        <begin position="448"/>
        <end position="463"/>
    </location>
</feature>
<feature type="helix" evidence="18">
    <location>
        <begin position="471"/>
        <end position="482"/>
    </location>
</feature>
<feature type="turn" evidence="18">
    <location>
        <begin position="489"/>
        <end position="494"/>
    </location>
</feature>
<feature type="strand" evidence="18">
    <location>
        <begin position="496"/>
        <end position="498"/>
    </location>
</feature>
<feature type="helix" evidence="18">
    <location>
        <begin position="499"/>
        <end position="503"/>
    </location>
</feature>
<feature type="strand" evidence="18">
    <location>
        <begin position="510"/>
        <end position="512"/>
    </location>
</feature>
<feature type="helix" evidence="18">
    <location>
        <begin position="514"/>
        <end position="528"/>
    </location>
</feature>
<feature type="helix" evidence="18">
    <location>
        <begin position="530"/>
        <end position="534"/>
    </location>
</feature>
<feature type="helix" evidence="18">
    <location>
        <begin position="544"/>
        <end position="551"/>
    </location>
</feature>
<feature type="strand" evidence="18">
    <location>
        <begin position="558"/>
        <end position="563"/>
    </location>
</feature>
<feature type="strand" evidence="18">
    <location>
        <begin position="565"/>
        <end position="569"/>
    </location>
</feature>
<feature type="strand" evidence="18">
    <location>
        <begin position="571"/>
        <end position="578"/>
    </location>
</feature>
<feature type="strand" evidence="18">
    <location>
        <begin position="584"/>
        <end position="589"/>
    </location>
</feature>
<feature type="helix" evidence="18">
    <location>
        <begin position="594"/>
        <end position="599"/>
    </location>
</feature>
<feature type="helix" evidence="18">
    <location>
        <begin position="602"/>
        <end position="607"/>
    </location>
</feature>
<feature type="turn" evidence="18">
    <location>
        <begin position="616"/>
        <end position="618"/>
    </location>
</feature>
<feature type="helix" evidence="18">
    <location>
        <begin position="621"/>
        <end position="624"/>
    </location>
</feature>
<feature type="turn" evidence="19">
    <location>
        <begin position="625"/>
        <end position="628"/>
    </location>
</feature>
<feature type="strand" evidence="19">
    <location>
        <begin position="638"/>
        <end position="640"/>
    </location>
</feature>
<feature type="strand" evidence="18">
    <location>
        <begin position="644"/>
        <end position="650"/>
    </location>
</feature>
<feature type="helix" evidence="21">
    <location>
        <begin position="786"/>
        <end position="789"/>
    </location>
</feature>
<feature type="helix" evidence="17">
    <location>
        <begin position="799"/>
        <end position="807"/>
    </location>
</feature>
<name>STAT6_HUMAN</name>
<organism>
    <name type="scientific">Homo sapiens</name>
    <name type="common">Human</name>
    <dbReference type="NCBI Taxonomy" id="9606"/>
    <lineage>
        <taxon>Eukaryota</taxon>
        <taxon>Metazoa</taxon>
        <taxon>Chordata</taxon>
        <taxon>Craniata</taxon>
        <taxon>Vertebrata</taxon>
        <taxon>Euteleostomi</taxon>
        <taxon>Mammalia</taxon>
        <taxon>Eutheria</taxon>
        <taxon>Euarchontoglires</taxon>
        <taxon>Primates</taxon>
        <taxon>Haplorrhini</taxon>
        <taxon>Catarrhini</taxon>
        <taxon>Hominidae</taxon>
        <taxon>Homo</taxon>
    </lineage>
</organism>
<comment type="function">
    <text evidence="7 9 10">Carries out a dual function: signal transduction and activation of transcription. Involved in IL4/interleukin-4- and IL3/interleukin-3-mediated signaling.</text>
</comment>
<comment type="subunit">
    <text evidence="1 5 6">Forms a homodimer or a heterodimer with a related family member (By similarity). Interacts with NCOA1 via its C-terminal LXXLL motif.</text>
</comment>
<comment type="interaction">
    <interactant intactId="EBI-1186478">
        <id>P42226</id>
    </interactant>
    <interactant intactId="EBI-447295">
        <id>Q09472</id>
        <label>EP300</label>
    </interactant>
    <organismsDiffer>false</organismsDiffer>
    <experiments>2</experiments>
</comment>
<comment type="interaction">
    <interactant intactId="EBI-1186478">
        <id>P42226</id>
    </interactant>
    <interactant intactId="EBI-367009">
        <id>P24394</id>
        <label>IL4R</label>
    </interactant>
    <organismsDiffer>false</organismsDiffer>
    <experiments>4</experiments>
</comment>
<comment type="interaction">
    <interactant intactId="EBI-1186478">
        <id>P42226</id>
    </interactant>
    <interactant intactId="EBI-372942">
        <id>Q13287</id>
        <label>NMI</label>
    </interactant>
    <organismsDiffer>false</organismsDiffer>
    <experiments>2</experiments>
</comment>
<comment type="interaction">
    <interactant intactId="EBI-1186478">
        <id>P42226</id>
    </interactant>
    <interactant intactId="EBI-1186478">
        <id>P42226</id>
        <label>STAT6</label>
    </interactant>
    <organismsDiffer>false</organismsDiffer>
    <experiments>2</experiments>
</comment>
<comment type="interaction">
    <interactant intactId="EBI-1186478">
        <id>P42226</id>
    </interactant>
    <interactant intactId="EBI-2800345">
        <id>Q86WV6</id>
        <label>STING1</label>
    </interactant>
    <organismsDiffer>false</organismsDiffer>
    <experiments>12</experiments>
</comment>
<comment type="interaction">
    <interactant intactId="EBI-1186478">
        <id>P42226</id>
    </interactant>
    <interactant intactId="EBI-356402">
        <id>Q9UHD2</id>
        <label>TBK1</label>
    </interactant>
    <organismsDiffer>false</organismsDiffer>
    <experiments>7</experiments>
</comment>
<comment type="subcellular location">
    <subcellularLocation>
        <location>Cytoplasm</location>
    </subcellularLocation>
    <subcellularLocation>
        <location evidence="9">Nucleus</location>
    </subcellularLocation>
    <text evidence="9">Translocated into the nucleus in response to phosphorylation.</text>
</comment>
<comment type="alternative products">
    <event type="alternative splicing"/>
    <isoform>
        <id>P42226-1</id>
        <name>1</name>
        <sequence type="displayed"/>
    </isoform>
    <isoform>
        <id>P42226-2</id>
        <name>2</name>
        <sequence type="described" ref="VSP_031871 VSP_031872"/>
    </isoform>
    <isoform>
        <id>P42226-3</id>
        <name>3</name>
        <sequence type="described" ref="VSP_045282"/>
    </isoform>
</comment>
<comment type="PTM">
    <text evidence="2 7 8">Tyrosine phosphorylated on Tyr-641 following stimulation by IL4/interleukin-4 (PubMed:27796300). Tyrosine phosphorylated following stimulation by IL3/interleukin-3 (By similarity). Dephosphorylation on tyrosine residues by PTPN2 negatively regulates the IL4/interleukin-4 mediated signaling (PubMed:17210636).</text>
</comment>
<comment type="PTM">
    <text evidence="8">Mono-ADP-ribosylated by PARP14.</text>
</comment>
<comment type="disease" evidence="9 10 11">
    <disease id="DI-06771">
        <name>Hyper-IgE syndrome 6, autosomal dominant, with recurrent infections</name>
        <acronym>HIES6</acronym>
        <description>An immunologic disorder characterized by severe allergic disease with onset in infancy. Common features are treatment-resistant atopic dermatitis, food allergies, asthma, eosinophilic gastrointestinal disease, and severe episodes of anaphylaxis. Half of the patients present with recurrent skin, respiratory, and viral infections. Clinical laboratory testing is notable for eosinophilia and markedly elevated serum IgE levels.</description>
        <dbReference type="MIM" id="620532"/>
    </disease>
    <text>The disease is caused by variants affecting the gene represented in this entry.</text>
</comment>
<comment type="similarity">
    <text evidence="15">Belongs to the transcription factor STAT family.</text>
</comment>
<sequence length="847" mass="94135">MSLWGLVSKMPPEKVQRLYVDFPQHLRHLLGDWLESQPWEFLVGSDAFCCNLASALLSDTVQHLQASVGEQGEGSTILQHISTLESIYQRDPLKLVATFRQILQGEKKAVMEQFRHLPMPFHWKQEELKFKTGLRRLQHRVGEIHLLREALQKGAEAGQVSLHSLIETPANGTGPSEALAMLLQETTGELEAAKALVLKRIQIWKRQQQLAGNGAPFEESLAPLQERCESLVDIYSQLQQEVGAAGGELEPKTRASLTGRLDEVLRTLVTSCFLVEKQPPQVLKTQTKFQAGVRFLLGLRFLGAPAKPPLVRADMVTEKQARELSVPQGPGAGAESTGEIINNTVPLENSIPGNCCSALFKNLLLKKIKRCERKGTESVTEEKCAVLFSASFTLGPGKLPIQLQALSLPLVVIVHGNQDNNAKATILWDNAFSEMDRVPFVVAERVPWEKMCETLNLKFMAEVGTNRGLLPEHFLFLAQKIFNDNSLSMEAFQHRSVSWSQFNKEILLGRGFTFWQWFDGVLDLTKRCLRSYWSDRLIIGFISKQYVTSLLLNEPDGTFLLRFSDSEIGGITIAHVIRGQDGSPQIENIQPFSAKDLSIRSLGDRIRDLAQLKNLYPKKPKDEAFRSHYKPEQMGKDGRGYVPATIKMTVERDQPLPTPELQMPTMVPSYDLGMAPDSSMSMQLGPDMVPQVYPPHSHSIPPYQGLSPEESVNVLSAFQEPHLQMPPSLGQMSLPFDQPHPQGLLPCQPQEHAVSSPDPLLCSDVTMVEDSCLSQPVTAFPQGTWIGEDIFPPLLPPTEQDLTKLLLEGQGESGGGSLGAQPLLQPSHYGQSGISMSHMDLRANPSW</sequence>